<gene>
    <name evidence="1" type="primary">dltC</name>
    <name type="ordered locus">SZO_06960</name>
</gene>
<feature type="chain" id="PRO_1000212074" description="D-alanyl carrier protein">
    <location>
        <begin position="1"/>
        <end position="79"/>
    </location>
</feature>
<feature type="domain" description="Carrier" evidence="1">
    <location>
        <begin position="1"/>
        <end position="77"/>
    </location>
</feature>
<feature type="modified residue" description="O-(pantetheine 4'-phosphoryl)serine" evidence="1">
    <location>
        <position position="35"/>
    </location>
</feature>
<comment type="function">
    <text evidence="1">Carrier protein involved in the D-alanylation of lipoteichoic acid (LTA). The loading of thioester-linked D-alanine onto DltC is catalyzed by D-alanine--D-alanyl carrier protein ligase DltA. The DltC-carried D-alanyl group is further transferred to cell membrane phosphatidylglycerol (PG) by forming an ester bond, probably catalyzed by DltD. D-alanylation of LTA plays an important role in modulating the properties of the cell wall in Gram-positive bacteria, influencing the net charge of the cell wall.</text>
</comment>
<comment type="pathway">
    <text evidence="1">Cell wall biogenesis; lipoteichoic acid biosynthesis.</text>
</comment>
<comment type="subcellular location">
    <subcellularLocation>
        <location evidence="1">Cytoplasm</location>
    </subcellularLocation>
</comment>
<comment type="PTM">
    <text evidence="1">4'-phosphopantetheine is transferred from CoA to a specific serine of apo-DCP.</text>
</comment>
<comment type="similarity">
    <text evidence="1">Belongs to the DltC family.</text>
</comment>
<name>DLTC_STRS7</name>
<proteinExistence type="inferred from homology"/>
<dbReference type="EMBL" id="FM204884">
    <property type="protein sequence ID" value="CAW98795.1"/>
    <property type="molecule type" value="Genomic_DNA"/>
</dbReference>
<dbReference type="SMR" id="C0MDC9"/>
<dbReference type="KEGG" id="seq:SZO_06960"/>
<dbReference type="eggNOG" id="COG0236">
    <property type="taxonomic scope" value="Bacteria"/>
</dbReference>
<dbReference type="HOGENOM" id="CLU_108696_19_0_9"/>
<dbReference type="UniPathway" id="UPA00556"/>
<dbReference type="Proteomes" id="UP000001368">
    <property type="component" value="Chromosome"/>
</dbReference>
<dbReference type="GO" id="GO:0005737">
    <property type="term" value="C:cytoplasm"/>
    <property type="evidence" value="ECO:0007669"/>
    <property type="project" value="UniProtKB-SubCell"/>
</dbReference>
<dbReference type="GO" id="GO:0036370">
    <property type="term" value="F:D-alanyl carrier activity"/>
    <property type="evidence" value="ECO:0007669"/>
    <property type="project" value="UniProtKB-UniRule"/>
</dbReference>
<dbReference type="GO" id="GO:0071555">
    <property type="term" value="P:cell wall organization"/>
    <property type="evidence" value="ECO:0007669"/>
    <property type="project" value="UniProtKB-KW"/>
</dbReference>
<dbReference type="GO" id="GO:0070395">
    <property type="term" value="P:lipoteichoic acid biosynthetic process"/>
    <property type="evidence" value="ECO:0007669"/>
    <property type="project" value="UniProtKB-UniRule"/>
</dbReference>
<dbReference type="Gene3D" id="1.10.1200.10">
    <property type="entry name" value="ACP-like"/>
    <property type="match status" value="1"/>
</dbReference>
<dbReference type="HAMAP" id="MF_00565">
    <property type="entry name" value="DltC"/>
    <property type="match status" value="1"/>
</dbReference>
<dbReference type="InterPro" id="IPR036736">
    <property type="entry name" value="ACP-like_sf"/>
</dbReference>
<dbReference type="InterPro" id="IPR003230">
    <property type="entry name" value="DltC"/>
</dbReference>
<dbReference type="InterPro" id="IPR009081">
    <property type="entry name" value="PP-bd_ACP"/>
</dbReference>
<dbReference type="NCBIfam" id="TIGR01688">
    <property type="entry name" value="dltC"/>
    <property type="match status" value="1"/>
</dbReference>
<dbReference type="NCBIfam" id="NF003464">
    <property type="entry name" value="PRK05087.1"/>
    <property type="match status" value="1"/>
</dbReference>
<dbReference type="Pfam" id="PF00550">
    <property type="entry name" value="PP-binding"/>
    <property type="match status" value="1"/>
</dbReference>
<dbReference type="SUPFAM" id="SSF47336">
    <property type="entry name" value="ACP-like"/>
    <property type="match status" value="1"/>
</dbReference>
<dbReference type="PROSITE" id="PS50075">
    <property type="entry name" value="CARRIER"/>
    <property type="match status" value="1"/>
</dbReference>
<accession>C0MDC9</accession>
<organism>
    <name type="scientific">Streptococcus equi subsp. zooepidemicus (strain H70)</name>
    <dbReference type="NCBI Taxonomy" id="553483"/>
    <lineage>
        <taxon>Bacteria</taxon>
        <taxon>Bacillati</taxon>
        <taxon>Bacillota</taxon>
        <taxon>Bacilli</taxon>
        <taxon>Lactobacillales</taxon>
        <taxon>Streptococcaceae</taxon>
        <taxon>Streptococcus</taxon>
    </lineage>
</organism>
<reference key="1">
    <citation type="journal article" date="2009" name="PLoS Pathog.">
        <title>Genomic evidence for the evolution of Streptococcus equi: host restriction, increased virulence, and genetic exchange with human pathogens.</title>
        <authorList>
            <person name="Holden M.T.G."/>
            <person name="Heather Z."/>
            <person name="Paillot R."/>
            <person name="Steward K.F."/>
            <person name="Webb K."/>
            <person name="Ainslie F."/>
            <person name="Jourdan T."/>
            <person name="Bason N.C."/>
            <person name="Holroyd N.E."/>
            <person name="Mungall K."/>
            <person name="Quail M.A."/>
            <person name="Sanders M."/>
            <person name="Simmonds M."/>
            <person name="Willey D."/>
            <person name="Brooks K."/>
            <person name="Aanensen D.M."/>
            <person name="Spratt B.G."/>
            <person name="Jolley K.A."/>
            <person name="Maiden M.C.J."/>
            <person name="Kehoe M."/>
            <person name="Chanter N."/>
            <person name="Bentley S.D."/>
            <person name="Robinson C."/>
            <person name="Maskell D.J."/>
            <person name="Parkhill J."/>
            <person name="Waller A.S."/>
        </authorList>
    </citation>
    <scope>NUCLEOTIDE SEQUENCE [LARGE SCALE GENOMIC DNA]</scope>
    <source>
        <strain>H70</strain>
    </source>
</reference>
<protein>
    <recommendedName>
        <fullName evidence="1">D-alanyl carrier protein</fullName>
        <shortName evidence="1">DCP</shortName>
    </recommendedName>
    <alternativeName>
        <fullName evidence="1">D-alanine--poly(phosphoribitol) ligase subunit 2</fullName>
    </alternativeName>
</protein>
<sequence length="79" mass="9008">MSTKETVIDLFDRLFMEDVSDMMDEDLFDAGVLDSLGTVELIVEIESIFNIKVPISEFGREDWNTANKIIQGIEELQHA</sequence>
<evidence type="ECO:0000255" key="1">
    <source>
        <dbReference type="HAMAP-Rule" id="MF_00565"/>
    </source>
</evidence>
<keyword id="KW-0961">Cell wall biogenesis/degradation</keyword>
<keyword id="KW-0963">Cytoplasm</keyword>
<keyword id="KW-0596">Phosphopantetheine</keyword>
<keyword id="KW-0597">Phosphoprotein</keyword>